<organism>
    <name type="scientific">Pseudomonas entomophila (strain L48)</name>
    <dbReference type="NCBI Taxonomy" id="384676"/>
    <lineage>
        <taxon>Bacteria</taxon>
        <taxon>Pseudomonadati</taxon>
        <taxon>Pseudomonadota</taxon>
        <taxon>Gammaproteobacteria</taxon>
        <taxon>Pseudomonadales</taxon>
        <taxon>Pseudomonadaceae</taxon>
        <taxon>Pseudomonas</taxon>
    </lineage>
</organism>
<keyword id="KW-0028">Amino-acid biosynthesis</keyword>
<keyword id="KW-0963">Cytoplasm</keyword>
<keyword id="KW-0368">Histidine biosynthesis</keyword>
<keyword id="KW-0456">Lyase</keyword>
<comment type="function">
    <text evidence="1">IGPS catalyzes the conversion of PRFAR and glutamine to IGP, AICAR and glutamate. The HisF subunit catalyzes the cyclization activity that produces IGP and AICAR from PRFAR using the ammonia provided by the HisH subunit.</text>
</comment>
<comment type="catalytic activity">
    <reaction evidence="1">
        <text>5-[(5-phospho-1-deoxy-D-ribulos-1-ylimino)methylamino]-1-(5-phospho-beta-D-ribosyl)imidazole-4-carboxamide + L-glutamine = D-erythro-1-(imidazol-4-yl)glycerol 3-phosphate + 5-amino-1-(5-phospho-beta-D-ribosyl)imidazole-4-carboxamide + L-glutamate + H(+)</text>
        <dbReference type="Rhea" id="RHEA:24793"/>
        <dbReference type="ChEBI" id="CHEBI:15378"/>
        <dbReference type="ChEBI" id="CHEBI:29985"/>
        <dbReference type="ChEBI" id="CHEBI:58278"/>
        <dbReference type="ChEBI" id="CHEBI:58359"/>
        <dbReference type="ChEBI" id="CHEBI:58475"/>
        <dbReference type="ChEBI" id="CHEBI:58525"/>
        <dbReference type="EC" id="4.3.2.10"/>
    </reaction>
</comment>
<comment type="pathway">
    <text evidence="1">Amino-acid biosynthesis; L-histidine biosynthesis; L-histidine from 5-phospho-alpha-D-ribose 1-diphosphate: step 5/9.</text>
</comment>
<comment type="subunit">
    <text evidence="1">Heterodimer of HisH and HisF.</text>
</comment>
<comment type="subcellular location">
    <subcellularLocation>
        <location evidence="1">Cytoplasm</location>
    </subcellularLocation>
</comment>
<comment type="similarity">
    <text evidence="1">Belongs to the HisA/HisF family.</text>
</comment>
<name>HIS6_PSEE4</name>
<sequence length="256" mass="27130">MALAKRIIPCLDVDNGRVVKGVKFENIRDAGDPVEIARRYNEQGADEITFLDITASVDGRDTTLHTVERMASQVFIPLTVGGGVRTVQDIRNLLNAGADKVSINTAAVFNPEFVGEAADRFGSQCIVVAIDAKKVSGPGEAPRWEIFTHGGRKPTGLDAVEWAKKMEGLGAGEILLTSMDQDGMKNGFDLGVTRAISDALGIPVIASGGVGNLQHLADGILEGHASAVLAASIFHFGEYTVPEAKAYMASRGIVVR</sequence>
<proteinExistence type="inferred from homology"/>
<evidence type="ECO:0000255" key="1">
    <source>
        <dbReference type="HAMAP-Rule" id="MF_01013"/>
    </source>
</evidence>
<dbReference type="EC" id="4.3.2.10" evidence="1"/>
<dbReference type="EMBL" id="CT573326">
    <property type="protein sequence ID" value="CAK17818.1"/>
    <property type="molecule type" value="Genomic_DNA"/>
</dbReference>
<dbReference type="RefSeq" id="WP_011536177.1">
    <property type="nucleotide sequence ID" value="NC_008027.1"/>
</dbReference>
<dbReference type="SMR" id="Q1I3G8"/>
<dbReference type="STRING" id="384676.PSEEN5191"/>
<dbReference type="GeneID" id="58766140"/>
<dbReference type="KEGG" id="pen:PSEEN5191"/>
<dbReference type="eggNOG" id="COG0107">
    <property type="taxonomic scope" value="Bacteria"/>
</dbReference>
<dbReference type="HOGENOM" id="CLU_048577_4_0_6"/>
<dbReference type="OrthoDB" id="9781903at2"/>
<dbReference type="UniPathway" id="UPA00031">
    <property type="reaction ID" value="UER00010"/>
</dbReference>
<dbReference type="Proteomes" id="UP000000658">
    <property type="component" value="Chromosome"/>
</dbReference>
<dbReference type="GO" id="GO:0005737">
    <property type="term" value="C:cytoplasm"/>
    <property type="evidence" value="ECO:0007669"/>
    <property type="project" value="UniProtKB-SubCell"/>
</dbReference>
<dbReference type="GO" id="GO:0000107">
    <property type="term" value="F:imidazoleglycerol-phosphate synthase activity"/>
    <property type="evidence" value="ECO:0007669"/>
    <property type="project" value="UniProtKB-UniRule"/>
</dbReference>
<dbReference type="GO" id="GO:0016829">
    <property type="term" value="F:lyase activity"/>
    <property type="evidence" value="ECO:0007669"/>
    <property type="project" value="UniProtKB-KW"/>
</dbReference>
<dbReference type="GO" id="GO:0000105">
    <property type="term" value="P:L-histidine biosynthetic process"/>
    <property type="evidence" value="ECO:0007669"/>
    <property type="project" value="UniProtKB-UniRule"/>
</dbReference>
<dbReference type="CDD" id="cd04731">
    <property type="entry name" value="HisF"/>
    <property type="match status" value="1"/>
</dbReference>
<dbReference type="FunFam" id="3.20.20.70:FF:000006">
    <property type="entry name" value="Imidazole glycerol phosphate synthase subunit HisF"/>
    <property type="match status" value="1"/>
</dbReference>
<dbReference type="Gene3D" id="3.20.20.70">
    <property type="entry name" value="Aldolase class I"/>
    <property type="match status" value="1"/>
</dbReference>
<dbReference type="HAMAP" id="MF_01013">
    <property type="entry name" value="HisF"/>
    <property type="match status" value="1"/>
</dbReference>
<dbReference type="InterPro" id="IPR013785">
    <property type="entry name" value="Aldolase_TIM"/>
</dbReference>
<dbReference type="InterPro" id="IPR006062">
    <property type="entry name" value="His_biosynth"/>
</dbReference>
<dbReference type="InterPro" id="IPR004651">
    <property type="entry name" value="HisF"/>
</dbReference>
<dbReference type="InterPro" id="IPR050064">
    <property type="entry name" value="IGPS_HisA/HisF"/>
</dbReference>
<dbReference type="InterPro" id="IPR011060">
    <property type="entry name" value="RibuloseP-bd_barrel"/>
</dbReference>
<dbReference type="NCBIfam" id="TIGR00735">
    <property type="entry name" value="hisF"/>
    <property type="match status" value="1"/>
</dbReference>
<dbReference type="PANTHER" id="PTHR21235:SF2">
    <property type="entry name" value="IMIDAZOLE GLYCEROL PHOSPHATE SYNTHASE HISHF"/>
    <property type="match status" value="1"/>
</dbReference>
<dbReference type="PANTHER" id="PTHR21235">
    <property type="entry name" value="IMIDAZOLE GLYCEROL PHOSPHATE SYNTHASE SUBUNIT HISF/H IGP SYNTHASE SUBUNIT HISF/H"/>
    <property type="match status" value="1"/>
</dbReference>
<dbReference type="Pfam" id="PF00977">
    <property type="entry name" value="His_biosynth"/>
    <property type="match status" value="1"/>
</dbReference>
<dbReference type="SUPFAM" id="SSF51366">
    <property type="entry name" value="Ribulose-phoshate binding barrel"/>
    <property type="match status" value="1"/>
</dbReference>
<reference key="1">
    <citation type="journal article" date="2006" name="Nat. Biotechnol.">
        <title>Complete genome sequence of the entomopathogenic and metabolically versatile soil bacterium Pseudomonas entomophila.</title>
        <authorList>
            <person name="Vodovar N."/>
            <person name="Vallenet D."/>
            <person name="Cruveiller S."/>
            <person name="Rouy Z."/>
            <person name="Barbe V."/>
            <person name="Acosta C."/>
            <person name="Cattolico L."/>
            <person name="Jubin C."/>
            <person name="Lajus A."/>
            <person name="Segurens B."/>
            <person name="Vacherie B."/>
            <person name="Wincker P."/>
            <person name="Weissenbach J."/>
            <person name="Lemaitre B."/>
            <person name="Medigue C."/>
            <person name="Boccard F."/>
        </authorList>
    </citation>
    <scope>NUCLEOTIDE SEQUENCE [LARGE SCALE GENOMIC DNA]</scope>
    <source>
        <strain>L48</strain>
    </source>
</reference>
<protein>
    <recommendedName>
        <fullName evidence="1">Imidazole glycerol phosphate synthase subunit HisF</fullName>
        <ecNumber evidence="1">4.3.2.10</ecNumber>
    </recommendedName>
    <alternativeName>
        <fullName evidence="1">IGP synthase cyclase subunit</fullName>
    </alternativeName>
    <alternativeName>
        <fullName evidence="1">IGP synthase subunit HisF</fullName>
    </alternativeName>
    <alternativeName>
        <fullName evidence="1">ImGP synthase subunit HisF</fullName>
        <shortName evidence="1">IGPS subunit HisF</shortName>
    </alternativeName>
</protein>
<feature type="chain" id="PRO_1000063119" description="Imidazole glycerol phosphate synthase subunit HisF">
    <location>
        <begin position="1"/>
        <end position="256"/>
    </location>
</feature>
<feature type="active site" evidence="1">
    <location>
        <position position="12"/>
    </location>
</feature>
<feature type="active site" evidence="1">
    <location>
        <position position="131"/>
    </location>
</feature>
<gene>
    <name evidence="1" type="primary">hisF</name>
    <name type="ordered locus">PSEEN5191</name>
</gene>
<accession>Q1I3G8</accession>